<reference key="1">
    <citation type="journal article" date="2010" name="J. Bacteriol.">
        <title>The genetic basis of laboratory adaptation in Caulobacter crescentus.</title>
        <authorList>
            <person name="Marks M.E."/>
            <person name="Castro-Rojas C.M."/>
            <person name="Teiling C."/>
            <person name="Du L."/>
            <person name="Kapatral V."/>
            <person name="Walunas T.L."/>
            <person name="Crosson S."/>
        </authorList>
    </citation>
    <scope>NUCLEOTIDE SEQUENCE [LARGE SCALE GENOMIC DNA]</scope>
    <source>
        <strain>NA1000 / CB15N</strain>
    </source>
</reference>
<protein>
    <recommendedName>
        <fullName evidence="1">UDP-N-acetylmuramate--L-alanine ligase</fullName>
        <ecNumber evidence="1">6.3.2.8</ecNumber>
    </recommendedName>
    <alternativeName>
        <fullName evidence="1">UDP-N-acetylmuramoyl-L-alanine synthetase</fullName>
    </alternativeName>
</protein>
<gene>
    <name evidence="1" type="primary">murC</name>
    <name type="ordered locus">CCNA_02629</name>
</gene>
<proteinExistence type="inferred from homology"/>
<dbReference type="EC" id="6.3.2.8" evidence="1"/>
<dbReference type="EMBL" id="CP001340">
    <property type="protein sequence ID" value="ACL96094.1"/>
    <property type="molecule type" value="Genomic_DNA"/>
</dbReference>
<dbReference type="RefSeq" id="WP_010920403.1">
    <property type="nucleotide sequence ID" value="NC_011916.1"/>
</dbReference>
<dbReference type="RefSeq" id="YP_002518002.1">
    <property type="nucleotide sequence ID" value="NC_011916.1"/>
</dbReference>
<dbReference type="SMR" id="B8H086"/>
<dbReference type="GeneID" id="7332731"/>
<dbReference type="KEGG" id="ccs:CCNA_02629"/>
<dbReference type="PATRIC" id="fig|565050.3.peg.2578"/>
<dbReference type="HOGENOM" id="CLU_028104_2_2_5"/>
<dbReference type="OrthoDB" id="9804126at2"/>
<dbReference type="PhylomeDB" id="B8H086"/>
<dbReference type="UniPathway" id="UPA00219"/>
<dbReference type="Proteomes" id="UP000001364">
    <property type="component" value="Chromosome"/>
</dbReference>
<dbReference type="GO" id="GO:0005737">
    <property type="term" value="C:cytoplasm"/>
    <property type="evidence" value="ECO:0007669"/>
    <property type="project" value="UniProtKB-SubCell"/>
</dbReference>
<dbReference type="GO" id="GO:0005524">
    <property type="term" value="F:ATP binding"/>
    <property type="evidence" value="ECO:0007669"/>
    <property type="project" value="UniProtKB-UniRule"/>
</dbReference>
<dbReference type="GO" id="GO:0008763">
    <property type="term" value="F:UDP-N-acetylmuramate-L-alanine ligase activity"/>
    <property type="evidence" value="ECO:0007669"/>
    <property type="project" value="UniProtKB-UniRule"/>
</dbReference>
<dbReference type="GO" id="GO:0051301">
    <property type="term" value="P:cell division"/>
    <property type="evidence" value="ECO:0007669"/>
    <property type="project" value="UniProtKB-KW"/>
</dbReference>
<dbReference type="GO" id="GO:0071555">
    <property type="term" value="P:cell wall organization"/>
    <property type="evidence" value="ECO:0007669"/>
    <property type="project" value="UniProtKB-KW"/>
</dbReference>
<dbReference type="GO" id="GO:0009252">
    <property type="term" value="P:peptidoglycan biosynthetic process"/>
    <property type="evidence" value="ECO:0007669"/>
    <property type="project" value="UniProtKB-UniRule"/>
</dbReference>
<dbReference type="GO" id="GO:0008360">
    <property type="term" value="P:regulation of cell shape"/>
    <property type="evidence" value="ECO:0007669"/>
    <property type="project" value="UniProtKB-KW"/>
</dbReference>
<dbReference type="Gene3D" id="3.90.190.20">
    <property type="entry name" value="Mur ligase, C-terminal domain"/>
    <property type="match status" value="1"/>
</dbReference>
<dbReference type="Gene3D" id="3.40.1190.10">
    <property type="entry name" value="Mur-like, catalytic domain"/>
    <property type="match status" value="1"/>
</dbReference>
<dbReference type="Gene3D" id="3.40.50.720">
    <property type="entry name" value="NAD(P)-binding Rossmann-like Domain"/>
    <property type="match status" value="1"/>
</dbReference>
<dbReference type="HAMAP" id="MF_00046">
    <property type="entry name" value="MurC"/>
    <property type="match status" value="1"/>
</dbReference>
<dbReference type="InterPro" id="IPR036565">
    <property type="entry name" value="Mur-like_cat_sf"/>
</dbReference>
<dbReference type="InterPro" id="IPR004101">
    <property type="entry name" value="Mur_ligase_C"/>
</dbReference>
<dbReference type="InterPro" id="IPR036615">
    <property type="entry name" value="Mur_ligase_C_dom_sf"/>
</dbReference>
<dbReference type="InterPro" id="IPR013221">
    <property type="entry name" value="Mur_ligase_cen"/>
</dbReference>
<dbReference type="InterPro" id="IPR000713">
    <property type="entry name" value="Mur_ligase_N"/>
</dbReference>
<dbReference type="InterPro" id="IPR050061">
    <property type="entry name" value="MurCDEF_pg_biosynth"/>
</dbReference>
<dbReference type="InterPro" id="IPR005758">
    <property type="entry name" value="UDP-N-AcMur_Ala_ligase_MurC"/>
</dbReference>
<dbReference type="NCBIfam" id="TIGR01082">
    <property type="entry name" value="murC"/>
    <property type="match status" value="1"/>
</dbReference>
<dbReference type="PANTHER" id="PTHR43445:SF3">
    <property type="entry name" value="UDP-N-ACETYLMURAMATE--L-ALANINE LIGASE"/>
    <property type="match status" value="1"/>
</dbReference>
<dbReference type="PANTHER" id="PTHR43445">
    <property type="entry name" value="UDP-N-ACETYLMURAMATE--L-ALANINE LIGASE-RELATED"/>
    <property type="match status" value="1"/>
</dbReference>
<dbReference type="Pfam" id="PF01225">
    <property type="entry name" value="Mur_ligase"/>
    <property type="match status" value="1"/>
</dbReference>
<dbReference type="Pfam" id="PF02875">
    <property type="entry name" value="Mur_ligase_C"/>
    <property type="match status" value="1"/>
</dbReference>
<dbReference type="Pfam" id="PF08245">
    <property type="entry name" value="Mur_ligase_M"/>
    <property type="match status" value="1"/>
</dbReference>
<dbReference type="SUPFAM" id="SSF51984">
    <property type="entry name" value="MurCD N-terminal domain"/>
    <property type="match status" value="1"/>
</dbReference>
<dbReference type="SUPFAM" id="SSF53623">
    <property type="entry name" value="MurD-like peptide ligases, catalytic domain"/>
    <property type="match status" value="1"/>
</dbReference>
<dbReference type="SUPFAM" id="SSF53244">
    <property type="entry name" value="MurD-like peptide ligases, peptide-binding domain"/>
    <property type="match status" value="1"/>
</dbReference>
<accession>B8H086</accession>
<organism>
    <name type="scientific">Caulobacter vibrioides (strain NA1000 / CB15N)</name>
    <name type="common">Caulobacter crescentus</name>
    <dbReference type="NCBI Taxonomy" id="565050"/>
    <lineage>
        <taxon>Bacteria</taxon>
        <taxon>Pseudomonadati</taxon>
        <taxon>Pseudomonadota</taxon>
        <taxon>Alphaproteobacteria</taxon>
        <taxon>Caulobacterales</taxon>
        <taxon>Caulobacteraceae</taxon>
        <taxon>Caulobacter</taxon>
    </lineage>
</organism>
<comment type="function">
    <text evidence="1">Cell wall formation.</text>
</comment>
<comment type="catalytic activity">
    <reaction evidence="1">
        <text>UDP-N-acetyl-alpha-D-muramate + L-alanine + ATP = UDP-N-acetyl-alpha-D-muramoyl-L-alanine + ADP + phosphate + H(+)</text>
        <dbReference type="Rhea" id="RHEA:23372"/>
        <dbReference type="ChEBI" id="CHEBI:15378"/>
        <dbReference type="ChEBI" id="CHEBI:30616"/>
        <dbReference type="ChEBI" id="CHEBI:43474"/>
        <dbReference type="ChEBI" id="CHEBI:57972"/>
        <dbReference type="ChEBI" id="CHEBI:70757"/>
        <dbReference type="ChEBI" id="CHEBI:83898"/>
        <dbReference type="ChEBI" id="CHEBI:456216"/>
        <dbReference type="EC" id="6.3.2.8"/>
    </reaction>
</comment>
<comment type="pathway">
    <text evidence="1">Cell wall biogenesis; peptidoglycan biosynthesis.</text>
</comment>
<comment type="subcellular location">
    <subcellularLocation>
        <location evidence="1">Cytoplasm</location>
    </subcellularLocation>
</comment>
<comment type="similarity">
    <text evidence="1">Belongs to the MurCDEF family.</text>
</comment>
<sequence length="473" mass="50302">MIQRRRPVPFELGPVHFIGIGGIGMSGIAEIMIRIGYTVQGSDAKASANTERLEKLGARIFIGHDAAHVEGASAIVYSTAVKADNPEMVAGRDKRLPLVRRAEMLAELMRLQFSVAVGGTHGKTTTTSMVAALLDAGGLDPTVVNGGIINAYGTNAKVGEGDWIVVEADESDGSFLKLKSTVAIVTNIDAEHLDHWGDFDAVKKGFQDFIQNIPFYGFAAVCTDHPEVQALTSRIENRRLVTYGTNPQAEVRVSNIEMGPEGATFDIIVSPRAGEAVRYDGLKMPMAGHHNVLNATAAVAVARELGVDAEAIAKGLAGFGGVKRRFTTTGVANGIRVVDDYGHHPVEIAAVLKAARAVTPNGKVIAVVQPHRFTRLRDLMTEFSSCFNDADTVIVADVYTAGEQPIPGVDRDALVAGLKKFGHRRALPLENPTALPRLIAAEATSGDLVVLLGAGDITTWSYALPGQLEALTK</sequence>
<keyword id="KW-0067">ATP-binding</keyword>
<keyword id="KW-0131">Cell cycle</keyword>
<keyword id="KW-0132">Cell division</keyword>
<keyword id="KW-0133">Cell shape</keyword>
<keyword id="KW-0961">Cell wall biogenesis/degradation</keyword>
<keyword id="KW-0963">Cytoplasm</keyword>
<keyword id="KW-0436">Ligase</keyword>
<keyword id="KW-0547">Nucleotide-binding</keyword>
<keyword id="KW-0573">Peptidoglycan synthesis</keyword>
<keyword id="KW-1185">Reference proteome</keyword>
<feature type="chain" id="PRO_1000117399" description="UDP-N-acetylmuramate--L-alanine ligase">
    <location>
        <begin position="1"/>
        <end position="473"/>
    </location>
</feature>
<feature type="binding site" evidence="1">
    <location>
        <begin position="119"/>
        <end position="125"/>
    </location>
    <ligand>
        <name>ATP</name>
        <dbReference type="ChEBI" id="CHEBI:30616"/>
    </ligand>
</feature>
<name>MURC_CAUVN</name>
<evidence type="ECO:0000255" key="1">
    <source>
        <dbReference type="HAMAP-Rule" id="MF_00046"/>
    </source>
</evidence>